<accession>Q8TWX0</accession>
<proteinExistence type="inferred from homology"/>
<name>CARB1_METKA</name>
<sequence length="564" mass="62399">MPETPNKVLIIGSGPIIVGQAAEFDYSGSQACKALREEGVEVVLVNSNPATIMTDPNMADRVYLEPLDARIVAKIIEEERPDGILPTLGGQTGLNIAVELDEMGVLEEYDVEVLGTSVETIVRAEDRDEFRAFMKKIGEPVCASEAVSSVEEAKEVAEEIGYPVVVRPAYTLGGTGGGIAEDEEELKRVVERGLEYSRVNQVLIEEYVGGWAEIEYEVMRDGSGNCITVCSMENVDPMGVHTGESIVVAPAQTLTEEEHQMLRSAALHIIDALGVEGGCNIQFALHRETGEYRVIEVNPRVSRSSALASKATGYPIARIAAKIAIGLRLDEIENQVTGETYAAFEPALDYVVVKIPRWPFDKFPEANRTLGTEMKSVGEVMAIGRTFEEALQKAIRSLEIGEPGLGPSPEELEADPEEIRRKIETPNDRRIFCIYAALKRGLMSVEEISELSGIDPWFVEKVKRIVEMEHEIVRRKDELLEFIRTGEADEETVEFVREVKRTGFSDEQIAELLGVDEDEIREARLGVGVEATYKLVDTCAAEFAAVSPYFYSTYEEECEALRYD</sequence>
<comment type="function">
    <text evidence="1">Large subunit of the glutamine-dependent carbamoyl phosphate synthetase (CPSase). CPSase catalyzes the formation of carbamoyl phosphate from the ammonia moiety of glutamine, carbonate, and phosphate donated by ATP, constituting the first step of 2 biosynthetic pathways, one leading to arginine and/or urea and the other to pyrimidine nucleotides. The large subunit (synthetase) binds the substrates ammonia (free or transferred from glutamine from the small subunit), hydrogencarbonate and ATP and carries out an ATP-coupled ligase reaction, activating hydrogencarbonate by forming carboxy phosphate which reacts with ammonia to form carbamoyl phosphate.</text>
</comment>
<comment type="catalytic activity">
    <reaction evidence="1">
        <text>hydrogencarbonate + L-glutamine + 2 ATP + H2O = carbamoyl phosphate + L-glutamate + 2 ADP + phosphate + 2 H(+)</text>
        <dbReference type="Rhea" id="RHEA:18633"/>
        <dbReference type="ChEBI" id="CHEBI:15377"/>
        <dbReference type="ChEBI" id="CHEBI:15378"/>
        <dbReference type="ChEBI" id="CHEBI:17544"/>
        <dbReference type="ChEBI" id="CHEBI:29985"/>
        <dbReference type="ChEBI" id="CHEBI:30616"/>
        <dbReference type="ChEBI" id="CHEBI:43474"/>
        <dbReference type="ChEBI" id="CHEBI:58228"/>
        <dbReference type="ChEBI" id="CHEBI:58359"/>
        <dbReference type="ChEBI" id="CHEBI:456216"/>
        <dbReference type="EC" id="6.3.5.5"/>
    </reaction>
</comment>
<comment type="catalytic activity">
    <reaction evidence="1">
        <text>hydrogencarbonate + NH4(+) + 2 ATP = carbamoyl phosphate + 2 ADP + phosphate + 2 H(+)</text>
        <dbReference type="Rhea" id="RHEA:18029"/>
        <dbReference type="ChEBI" id="CHEBI:15378"/>
        <dbReference type="ChEBI" id="CHEBI:17544"/>
        <dbReference type="ChEBI" id="CHEBI:28938"/>
        <dbReference type="ChEBI" id="CHEBI:30616"/>
        <dbReference type="ChEBI" id="CHEBI:43474"/>
        <dbReference type="ChEBI" id="CHEBI:58228"/>
        <dbReference type="ChEBI" id="CHEBI:456216"/>
        <dbReference type="EC" id="6.3.4.16"/>
    </reaction>
</comment>
<comment type="cofactor">
    <cofactor evidence="1">
        <name>Mg(2+)</name>
        <dbReference type="ChEBI" id="CHEBI:18420"/>
    </cofactor>
    <cofactor evidence="1">
        <name>Mn(2+)</name>
        <dbReference type="ChEBI" id="CHEBI:29035"/>
    </cofactor>
    <text evidence="3">Binds 2 Mg(2+) or Mn(2+) ions per subunit.</text>
</comment>
<comment type="pathway">
    <text evidence="1">Amino-acid biosynthesis; L-arginine biosynthesis; carbamoyl phosphate from bicarbonate: step 1/1.</text>
</comment>
<comment type="pathway">
    <text evidence="1">Pyrimidine metabolism; UMP biosynthesis via de novo pathway; (S)-dihydroorotate from bicarbonate: step 1/3.</text>
</comment>
<comment type="subunit">
    <text evidence="1">Composed of two chains; the small (or glutamine) chain promotes the hydrolysis of glutamine to ammonia, which is used by the large (or ammonia) chain to synthesize carbamoyl phosphate. Tetramer of heterodimers (alpha,beta)4.</text>
</comment>
<comment type="domain">
    <text>Corresponds to the N-terminal section.</text>
</comment>
<comment type="domain">
    <text evidence="1">The large subunit is composed of 2 ATP-grasp domains that are involved in binding the 2 ATP molecules needed for carbamoyl phosphate synthesis. The N-terminal ATP-grasp domain (referred to as the carboxyphosphate synthetic component) catalyzes the ATP-dependent phosphorylation of hydrogencarbonate to carboxyphosphate and the subsequent nucleophilic attack by ammonia to form a carbamate intermediate. The C-terminal ATP-grasp domain (referred to as the carbamoyl phosphate synthetic component) then catalyzes the phosphorylation of carbamate with the second ATP to form the end product carbamoyl phosphate. The reactive and unstable enzyme intermediates are sequentially channeled from one active site to the next through the interior of the protein over a distance of at least 96 A.</text>
</comment>
<comment type="similarity">
    <text evidence="3">Belongs to the CarB family.</text>
</comment>
<comment type="caution">
    <text evidence="3">CarB is split into two genes in M.kandleri (MK0911 and MK1666).</text>
</comment>
<reference key="1">
    <citation type="journal article" date="2002" name="Proc. Natl. Acad. Sci. U.S.A.">
        <title>The complete genome of hyperthermophile Methanopyrus kandleri AV19 and monophyly of archaeal methanogens.</title>
        <authorList>
            <person name="Slesarev A.I."/>
            <person name="Mezhevaya K.V."/>
            <person name="Makarova K.S."/>
            <person name="Polushin N.N."/>
            <person name="Shcherbinina O.V."/>
            <person name="Shakhova V.V."/>
            <person name="Belova G.I."/>
            <person name="Aravind L."/>
            <person name="Natale D.A."/>
            <person name="Rogozin I.B."/>
            <person name="Tatusov R.L."/>
            <person name="Wolf Y.I."/>
            <person name="Stetter K.O."/>
            <person name="Malykh A.G."/>
            <person name="Koonin E.V."/>
            <person name="Kozyavkin S.A."/>
        </authorList>
    </citation>
    <scope>NUCLEOTIDE SEQUENCE [LARGE SCALE GENOMIC DNA]</scope>
    <source>
        <strain>AV19 / DSM 6324 / JCM 9639 / NBRC 100938</strain>
    </source>
</reference>
<evidence type="ECO:0000250" key="1">
    <source>
        <dbReference type="UniProtKB" id="P00968"/>
    </source>
</evidence>
<evidence type="ECO:0000255" key="2">
    <source>
        <dbReference type="PROSITE-ProRule" id="PRU00409"/>
    </source>
</evidence>
<evidence type="ECO:0000305" key="3"/>
<protein>
    <recommendedName>
        <fullName evidence="3">Carbamoyl phosphate synthase large chain, N-terminal section</fullName>
        <ecNumber evidence="1">6.3.4.16</ecNumber>
        <ecNumber evidence="1">6.3.5.5</ecNumber>
    </recommendedName>
    <alternativeName>
        <fullName>Carbamoyl phosphate synthetase ammonia chain</fullName>
    </alternativeName>
</protein>
<dbReference type="EC" id="6.3.4.16" evidence="1"/>
<dbReference type="EC" id="6.3.5.5" evidence="1"/>
<dbReference type="EMBL" id="AE009439">
    <property type="protein sequence ID" value="AAM02124.1"/>
    <property type="molecule type" value="Genomic_DNA"/>
</dbReference>
<dbReference type="SMR" id="Q8TWX0"/>
<dbReference type="FunCoup" id="Q8TWX0">
    <property type="interactions" value="87"/>
</dbReference>
<dbReference type="STRING" id="190192.MK0911"/>
<dbReference type="PaxDb" id="190192-MK0911"/>
<dbReference type="EnsemblBacteria" id="AAM02124">
    <property type="protein sequence ID" value="AAM02124"/>
    <property type="gene ID" value="MK0911"/>
</dbReference>
<dbReference type="KEGG" id="mka:MK0911"/>
<dbReference type="PATRIC" id="fig|190192.8.peg.953"/>
<dbReference type="HOGENOM" id="CLU_000513_1_1_2"/>
<dbReference type="InParanoid" id="Q8TWX0"/>
<dbReference type="OrthoDB" id="85487at2157"/>
<dbReference type="UniPathway" id="UPA00068">
    <property type="reaction ID" value="UER00171"/>
</dbReference>
<dbReference type="UniPathway" id="UPA00070">
    <property type="reaction ID" value="UER00115"/>
</dbReference>
<dbReference type="Proteomes" id="UP000001826">
    <property type="component" value="Chromosome"/>
</dbReference>
<dbReference type="GO" id="GO:0005737">
    <property type="term" value="C:cytoplasm"/>
    <property type="evidence" value="ECO:0007669"/>
    <property type="project" value="TreeGrafter"/>
</dbReference>
<dbReference type="GO" id="GO:0005524">
    <property type="term" value="F:ATP binding"/>
    <property type="evidence" value="ECO:0007669"/>
    <property type="project" value="UniProtKB-KW"/>
</dbReference>
<dbReference type="GO" id="GO:0004087">
    <property type="term" value="F:carbamoyl-phosphate synthase (ammonia) activity"/>
    <property type="evidence" value="ECO:0007669"/>
    <property type="project" value="RHEA"/>
</dbReference>
<dbReference type="GO" id="GO:0004088">
    <property type="term" value="F:carbamoyl-phosphate synthase (glutamine-hydrolyzing) activity"/>
    <property type="evidence" value="ECO:0007669"/>
    <property type="project" value="UniProtKB-EC"/>
</dbReference>
<dbReference type="GO" id="GO:0046872">
    <property type="term" value="F:metal ion binding"/>
    <property type="evidence" value="ECO:0007669"/>
    <property type="project" value="UniProtKB-KW"/>
</dbReference>
<dbReference type="GO" id="GO:0044205">
    <property type="term" value="P:'de novo' UMP biosynthetic process"/>
    <property type="evidence" value="ECO:0007669"/>
    <property type="project" value="UniProtKB-UniPathway"/>
</dbReference>
<dbReference type="GO" id="GO:0006541">
    <property type="term" value="P:glutamine metabolic process"/>
    <property type="evidence" value="ECO:0007669"/>
    <property type="project" value="TreeGrafter"/>
</dbReference>
<dbReference type="GO" id="GO:0006526">
    <property type="term" value="P:L-arginine biosynthetic process"/>
    <property type="evidence" value="ECO:0007669"/>
    <property type="project" value="UniProtKB-UniPathway"/>
</dbReference>
<dbReference type="FunFam" id="1.10.1030.10:FF:000002">
    <property type="entry name" value="Carbamoyl-phosphate synthase large chain"/>
    <property type="match status" value="1"/>
</dbReference>
<dbReference type="FunFam" id="3.30.470.20:FF:000001">
    <property type="entry name" value="Carbamoyl-phosphate synthase large chain"/>
    <property type="match status" value="1"/>
</dbReference>
<dbReference type="FunFam" id="3.40.50.20:FF:000001">
    <property type="entry name" value="Carbamoyl-phosphate synthase large chain"/>
    <property type="match status" value="1"/>
</dbReference>
<dbReference type="Gene3D" id="3.40.50.20">
    <property type="match status" value="1"/>
</dbReference>
<dbReference type="Gene3D" id="3.30.470.20">
    <property type="entry name" value="ATP-grasp fold, B domain"/>
    <property type="match status" value="1"/>
</dbReference>
<dbReference type="Gene3D" id="1.10.1030.10">
    <property type="entry name" value="Carbamoyl-phosphate synthetase, large subunit oligomerisation domain"/>
    <property type="match status" value="1"/>
</dbReference>
<dbReference type="InterPro" id="IPR011761">
    <property type="entry name" value="ATP-grasp"/>
</dbReference>
<dbReference type="InterPro" id="IPR005480">
    <property type="entry name" value="CarbamoylP_synth_lsu_oligo"/>
</dbReference>
<dbReference type="InterPro" id="IPR036897">
    <property type="entry name" value="CarbamoylP_synth_lsu_oligo_sf"/>
</dbReference>
<dbReference type="InterPro" id="IPR005479">
    <property type="entry name" value="CbamoylP_synth_lsu-like_ATP-bd"/>
</dbReference>
<dbReference type="InterPro" id="IPR005483">
    <property type="entry name" value="CbamoylP_synth_lsu_CPSase_dom"/>
</dbReference>
<dbReference type="InterPro" id="IPR016185">
    <property type="entry name" value="PreATP-grasp_dom_sf"/>
</dbReference>
<dbReference type="NCBIfam" id="NF003671">
    <property type="entry name" value="PRK05294.1"/>
    <property type="match status" value="1"/>
</dbReference>
<dbReference type="NCBIfam" id="NF009455">
    <property type="entry name" value="PRK12815.1"/>
    <property type="match status" value="1"/>
</dbReference>
<dbReference type="PANTHER" id="PTHR11405:SF53">
    <property type="entry name" value="CARBAMOYL-PHOSPHATE SYNTHASE [AMMONIA], MITOCHONDRIAL"/>
    <property type="match status" value="1"/>
</dbReference>
<dbReference type="PANTHER" id="PTHR11405">
    <property type="entry name" value="CARBAMOYLTRANSFERASE FAMILY MEMBER"/>
    <property type="match status" value="1"/>
</dbReference>
<dbReference type="Pfam" id="PF02786">
    <property type="entry name" value="CPSase_L_D2"/>
    <property type="match status" value="1"/>
</dbReference>
<dbReference type="Pfam" id="PF02787">
    <property type="entry name" value="CPSase_L_D3"/>
    <property type="match status" value="1"/>
</dbReference>
<dbReference type="PRINTS" id="PR00098">
    <property type="entry name" value="CPSASE"/>
</dbReference>
<dbReference type="SMART" id="SM01096">
    <property type="entry name" value="CPSase_L_D3"/>
    <property type="match status" value="1"/>
</dbReference>
<dbReference type="SUPFAM" id="SSF48108">
    <property type="entry name" value="Carbamoyl phosphate synthetase, large subunit connection domain"/>
    <property type="match status" value="1"/>
</dbReference>
<dbReference type="SUPFAM" id="SSF56059">
    <property type="entry name" value="Glutathione synthetase ATP-binding domain-like"/>
    <property type="match status" value="1"/>
</dbReference>
<dbReference type="SUPFAM" id="SSF52440">
    <property type="entry name" value="PreATP-grasp domain"/>
    <property type="match status" value="1"/>
</dbReference>
<dbReference type="PROSITE" id="PS50975">
    <property type="entry name" value="ATP_GRASP"/>
    <property type="match status" value="1"/>
</dbReference>
<dbReference type="PROSITE" id="PS00866">
    <property type="entry name" value="CPSASE_1"/>
    <property type="match status" value="1"/>
</dbReference>
<dbReference type="PROSITE" id="PS00867">
    <property type="entry name" value="CPSASE_2"/>
    <property type="match status" value="1"/>
</dbReference>
<feature type="chain" id="PRO_0000145077" description="Carbamoyl phosphate synthase large chain, N-terminal section">
    <location>
        <begin position="1"/>
        <end position="564"/>
    </location>
</feature>
<feature type="domain" description="ATP-grasp" evidence="1">
    <location>
        <begin position="131"/>
        <end position="325"/>
    </location>
</feature>
<feature type="region of interest" description="Carboxyphosphate synthetic domain" evidence="1">
    <location>
        <begin position="1"/>
        <end position="399"/>
    </location>
</feature>
<feature type="region of interest" description="Oligomerization domain" evidence="1">
    <location>
        <begin position="400"/>
        <end position="560"/>
    </location>
</feature>
<feature type="binding site" evidence="1">
    <location>
        <position position="127"/>
    </location>
    <ligand>
        <name>ATP</name>
        <dbReference type="ChEBI" id="CHEBI:30616"/>
        <label>1</label>
    </ligand>
</feature>
<feature type="binding site" evidence="1">
    <location>
        <position position="167"/>
    </location>
    <ligand>
        <name>ATP</name>
        <dbReference type="ChEBI" id="CHEBI:30616"/>
        <label>1</label>
    </ligand>
</feature>
<feature type="binding site" evidence="1">
    <location>
        <position position="173"/>
    </location>
    <ligand>
        <name>ATP</name>
        <dbReference type="ChEBI" id="CHEBI:30616"/>
        <label>1</label>
    </ligand>
</feature>
<feature type="binding site" evidence="1">
    <location>
        <position position="174"/>
    </location>
    <ligand>
        <name>ATP</name>
        <dbReference type="ChEBI" id="CHEBI:30616"/>
        <label>1</label>
    </ligand>
</feature>
<feature type="binding site" evidence="1">
    <location>
        <position position="206"/>
    </location>
    <ligand>
        <name>ATP</name>
        <dbReference type="ChEBI" id="CHEBI:30616"/>
        <label>1</label>
    </ligand>
</feature>
<feature type="binding site" evidence="1">
    <location>
        <position position="208"/>
    </location>
    <ligand>
        <name>ATP</name>
        <dbReference type="ChEBI" id="CHEBI:30616"/>
        <label>1</label>
    </ligand>
</feature>
<feature type="binding site" evidence="1">
    <location>
        <position position="213"/>
    </location>
    <ligand>
        <name>ATP</name>
        <dbReference type="ChEBI" id="CHEBI:30616"/>
        <label>1</label>
    </ligand>
</feature>
<feature type="binding site" evidence="1">
    <location>
        <position position="239"/>
    </location>
    <ligand>
        <name>ATP</name>
        <dbReference type="ChEBI" id="CHEBI:30616"/>
        <label>1</label>
    </ligand>
</feature>
<feature type="binding site" evidence="1">
    <location>
        <position position="240"/>
    </location>
    <ligand>
        <name>ATP</name>
        <dbReference type="ChEBI" id="CHEBI:30616"/>
        <label>1</label>
    </ligand>
</feature>
<feature type="binding site" evidence="1">
    <location>
        <position position="241"/>
    </location>
    <ligand>
        <name>ATP</name>
        <dbReference type="ChEBI" id="CHEBI:30616"/>
        <label>1</label>
    </ligand>
</feature>
<feature type="binding site" evidence="1">
    <location>
        <position position="282"/>
    </location>
    <ligand>
        <name>ATP</name>
        <dbReference type="ChEBI" id="CHEBI:30616"/>
        <label>1</label>
    </ligand>
</feature>
<feature type="binding site" evidence="2">
    <location>
        <position position="282"/>
    </location>
    <ligand>
        <name>Mg(2+)</name>
        <dbReference type="ChEBI" id="CHEBI:18420"/>
        <label>1</label>
    </ligand>
</feature>
<feature type="binding site" evidence="2">
    <location>
        <position position="282"/>
    </location>
    <ligand>
        <name>Mn(2+)</name>
        <dbReference type="ChEBI" id="CHEBI:29035"/>
        <label>1</label>
    </ligand>
</feature>
<feature type="binding site" evidence="1">
    <location>
        <position position="296"/>
    </location>
    <ligand>
        <name>ATP</name>
        <dbReference type="ChEBI" id="CHEBI:30616"/>
        <label>1</label>
    </ligand>
</feature>
<feature type="binding site" evidence="2">
    <location>
        <position position="296"/>
    </location>
    <ligand>
        <name>Mg(2+)</name>
        <dbReference type="ChEBI" id="CHEBI:18420"/>
        <label>1</label>
    </ligand>
</feature>
<feature type="binding site" evidence="2">
    <location>
        <position position="296"/>
    </location>
    <ligand>
        <name>Mg(2+)</name>
        <dbReference type="ChEBI" id="CHEBI:18420"/>
        <label>2</label>
    </ligand>
</feature>
<feature type="binding site" evidence="2">
    <location>
        <position position="296"/>
    </location>
    <ligand>
        <name>Mn(2+)</name>
        <dbReference type="ChEBI" id="CHEBI:29035"/>
        <label>1</label>
    </ligand>
</feature>
<feature type="binding site" evidence="2">
    <location>
        <position position="296"/>
    </location>
    <ligand>
        <name>Mn(2+)</name>
        <dbReference type="ChEBI" id="CHEBI:29035"/>
        <label>2</label>
    </ligand>
</feature>
<feature type="binding site" evidence="2">
    <location>
        <position position="298"/>
    </location>
    <ligand>
        <name>Mg(2+)</name>
        <dbReference type="ChEBI" id="CHEBI:18420"/>
        <label>2</label>
    </ligand>
</feature>
<feature type="binding site" evidence="2">
    <location>
        <position position="298"/>
    </location>
    <ligand>
        <name>Mn(2+)</name>
        <dbReference type="ChEBI" id="CHEBI:29035"/>
        <label>2</label>
    </ligand>
</feature>
<gene>
    <name type="primary">carB1</name>
    <name type="synonym">carB_2</name>
    <name type="ordered locus">MK0911</name>
</gene>
<organism>
    <name type="scientific">Methanopyrus kandleri (strain AV19 / DSM 6324 / JCM 9639 / NBRC 100938)</name>
    <dbReference type="NCBI Taxonomy" id="190192"/>
    <lineage>
        <taxon>Archaea</taxon>
        <taxon>Methanobacteriati</taxon>
        <taxon>Methanobacteriota</taxon>
        <taxon>Methanomada group</taxon>
        <taxon>Methanopyri</taxon>
        <taxon>Methanopyrales</taxon>
        <taxon>Methanopyraceae</taxon>
        <taxon>Methanopyrus</taxon>
    </lineage>
</organism>
<keyword id="KW-0028">Amino-acid biosynthesis</keyword>
<keyword id="KW-0055">Arginine biosynthesis</keyword>
<keyword id="KW-0067">ATP-binding</keyword>
<keyword id="KW-0436">Ligase</keyword>
<keyword id="KW-0460">Magnesium</keyword>
<keyword id="KW-0464">Manganese</keyword>
<keyword id="KW-0479">Metal-binding</keyword>
<keyword id="KW-0547">Nucleotide-binding</keyword>
<keyword id="KW-0665">Pyrimidine biosynthesis</keyword>
<keyword id="KW-1185">Reference proteome</keyword>
<keyword id="KW-0677">Repeat</keyword>